<reference key="1">
    <citation type="journal article" date="1997" name="Nature">
        <title>The complete genome sequence of the hyperthermophilic, sulphate-reducing archaeon Archaeoglobus fulgidus.</title>
        <authorList>
            <person name="Klenk H.-P."/>
            <person name="Clayton R.A."/>
            <person name="Tomb J.-F."/>
            <person name="White O."/>
            <person name="Nelson K.E."/>
            <person name="Ketchum K.A."/>
            <person name="Dodson R.J."/>
            <person name="Gwinn M.L."/>
            <person name="Hickey E.K."/>
            <person name="Peterson J.D."/>
            <person name="Richardson D.L."/>
            <person name="Kerlavage A.R."/>
            <person name="Graham D.E."/>
            <person name="Kyrpides N.C."/>
            <person name="Fleischmann R.D."/>
            <person name="Quackenbush J."/>
            <person name="Lee N.H."/>
            <person name="Sutton G.G."/>
            <person name="Gill S.R."/>
            <person name="Kirkness E.F."/>
            <person name="Dougherty B.A."/>
            <person name="McKenney K."/>
            <person name="Adams M.D."/>
            <person name="Loftus B.J."/>
            <person name="Peterson S.N."/>
            <person name="Reich C.I."/>
            <person name="McNeil L.K."/>
            <person name="Badger J.H."/>
            <person name="Glodek A."/>
            <person name="Zhou L."/>
            <person name="Overbeek R."/>
            <person name="Gocayne J.D."/>
            <person name="Weidman J.F."/>
            <person name="McDonald L.A."/>
            <person name="Utterback T.R."/>
            <person name="Cotton M.D."/>
            <person name="Spriggs T."/>
            <person name="Artiach P."/>
            <person name="Kaine B.P."/>
            <person name="Sykes S.M."/>
            <person name="Sadow P.W."/>
            <person name="D'Andrea K.P."/>
            <person name="Bowman C."/>
            <person name="Fujii C."/>
            <person name="Garland S.A."/>
            <person name="Mason T.M."/>
            <person name="Olsen G.J."/>
            <person name="Fraser C.M."/>
            <person name="Smith H.O."/>
            <person name="Woese C.R."/>
            <person name="Venter J.C."/>
        </authorList>
    </citation>
    <scope>NUCLEOTIDE SEQUENCE [LARGE SCALE GENOMIC DNA]</scope>
    <source>
        <strain>ATCC 49558 / DSM 4304 / JCM 9628 / NBRC 100126 / VC-16</strain>
    </source>
</reference>
<dbReference type="EMBL" id="AE000782">
    <property type="protein sequence ID" value="AAB89683.1"/>
    <property type="molecule type" value="Genomic_DNA"/>
</dbReference>
<dbReference type="PIR" id="C69446">
    <property type="entry name" value="C69446"/>
</dbReference>
<dbReference type="RefSeq" id="WP_010879069.1">
    <property type="nucleotide sequence ID" value="NC_000917.1"/>
</dbReference>
<dbReference type="STRING" id="224325.AF_1572"/>
<dbReference type="PaxDb" id="224325-AF_1572"/>
<dbReference type="DNASU" id="1484800"/>
<dbReference type="EnsemblBacteria" id="AAB89683">
    <property type="protein sequence ID" value="AAB89683"/>
    <property type="gene ID" value="AF_1572"/>
</dbReference>
<dbReference type="GeneID" id="1484800"/>
<dbReference type="KEGG" id="afu:AF_1572"/>
<dbReference type="HOGENOM" id="CLU_1880939_0_0_2"/>
<dbReference type="Proteomes" id="UP000002199">
    <property type="component" value="Chromosome"/>
</dbReference>
<organism>
    <name type="scientific">Archaeoglobus fulgidus (strain ATCC 49558 / DSM 4304 / JCM 9628 / NBRC 100126 / VC-16)</name>
    <dbReference type="NCBI Taxonomy" id="224325"/>
    <lineage>
        <taxon>Archaea</taxon>
        <taxon>Methanobacteriati</taxon>
        <taxon>Methanobacteriota</taxon>
        <taxon>Archaeoglobi</taxon>
        <taxon>Archaeoglobales</taxon>
        <taxon>Archaeoglobaceae</taxon>
        <taxon>Archaeoglobus</taxon>
    </lineage>
</organism>
<protein>
    <recommendedName>
        <fullName>Uncharacterized protein AF_1572</fullName>
    </recommendedName>
</protein>
<sequence length="135" mass="16248">MELPPKNFETIKINNRTYIKLTGDKPLSEKLWPERKNETLYRMEFRVEFPKMSIENLSEYKIDDESVRVLLNYTNASYVRLYISLYYLEFDYVDILGKRFYTNFGHYDSLRCWSVVNVTEVERNKWISAPVSCES</sequence>
<proteinExistence type="predicted"/>
<gene>
    <name type="ordered locus">AF_1572</name>
</gene>
<keyword id="KW-1185">Reference proteome</keyword>
<feature type="chain" id="PRO_0000128026" description="Uncharacterized protein AF_1572">
    <location>
        <begin position="1"/>
        <end position="135"/>
    </location>
</feature>
<accession>O28700</accession>
<name>Y1572_ARCFU</name>